<protein>
    <recommendedName>
        <fullName>Cystatin-F</fullName>
    </recommendedName>
    <alternativeName>
        <fullName>Cystatin-7</fullName>
    </alternativeName>
    <alternativeName>
        <fullName>Cystatin-like metastasis-associated protein</fullName>
        <shortName>CMAP</shortName>
    </alternativeName>
    <alternativeName>
        <fullName>Leukocystatin</fullName>
    </alternativeName>
</protein>
<dbReference type="EMBL" id="AF031824">
    <property type="protein sequence ID" value="AAC39788.1"/>
    <property type="molecule type" value="mRNA"/>
</dbReference>
<dbReference type="EMBL" id="AF036342">
    <property type="protein sequence ID" value="AAC35747.1"/>
    <property type="molecule type" value="mRNA"/>
</dbReference>
<dbReference type="EMBL" id="AB029636">
    <property type="protein sequence ID" value="BAB11886.1"/>
    <property type="status" value="ALT_INIT"/>
    <property type="molecule type" value="Genomic_DNA"/>
</dbReference>
<dbReference type="EMBL" id="AJ510167">
    <property type="protein sequence ID" value="CAD52872.1"/>
    <property type="molecule type" value="Genomic_DNA"/>
</dbReference>
<dbReference type="EMBL" id="AJ510168">
    <property type="protein sequence ID" value="CAD52872.1"/>
    <property type="status" value="JOINED"/>
    <property type="molecule type" value="Genomic_DNA"/>
</dbReference>
<dbReference type="EMBL" id="AJ510169">
    <property type="protein sequence ID" value="CAD52872.1"/>
    <property type="status" value="JOINED"/>
    <property type="molecule type" value="Genomic_DNA"/>
</dbReference>
<dbReference type="EMBL" id="AJ510170">
    <property type="protein sequence ID" value="CAD52872.1"/>
    <property type="status" value="JOINED"/>
    <property type="molecule type" value="Genomic_DNA"/>
</dbReference>
<dbReference type="EMBL" id="AB015225">
    <property type="protein sequence ID" value="BAA34941.1"/>
    <property type="status" value="ALT_INIT"/>
    <property type="molecule type" value="mRNA"/>
</dbReference>
<dbReference type="EMBL" id="BT009825">
    <property type="protein sequence ID" value="AAP88827.1"/>
    <property type="status" value="ALT_INIT"/>
    <property type="molecule type" value="mRNA"/>
</dbReference>
<dbReference type="EMBL" id="CR541860">
    <property type="protein sequence ID" value="CAG46658.1"/>
    <property type="molecule type" value="mRNA"/>
</dbReference>
<dbReference type="EMBL" id="CR541878">
    <property type="protein sequence ID" value="CAG46676.1"/>
    <property type="molecule type" value="mRNA"/>
</dbReference>
<dbReference type="EMBL" id="AL035661">
    <property type="status" value="NOT_ANNOTATED_CDS"/>
    <property type="molecule type" value="Genomic_DNA"/>
</dbReference>
<dbReference type="EMBL" id="BC015507">
    <property type="protein sequence ID" value="AAH15507.1"/>
    <property type="status" value="ALT_INIT"/>
    <property type="molecule type" value="mRNA"/>
</dbReference>
<dbReference type="CCDS" id="CCDS13165.2"/>
<dbReference type="RefSeq" id="NP_003641.3">
    <property type="nucleotide sequence ID" value="NM_003650.3"/>
</dbReference>
<dbReference type="PDB" id="2CH9">
    <property type="method" value="X-ray"/>
    <property type="resolution" value="2.10 A"/>
    <property type="chains" value="A=20-145"/>
</dbReference>
<dbReference type="PDBsum" id="2CH9"/>
<dbReference type="SMR" id="O76096"/>
<dbReference type="BioGRID" id="114100">
    <property type="interactions" value="13"/>
</dbReference>
<dbReference type="FunCoup" id="O76096">
    <property type="interactions" value="87"/>
</dbReference>
<dbReference type="IntAct" id="O76096">
    <property type="interactions" value="14"/>
</dbReference>
<dbReference type="MINT" id="O76096"/>
<dbReference type="STRING" id="9606.ENSP00000420384"/>
<dbReference type="MEROPS" id="I25.007"/>
<dbReference type="GlyCosmos" id="O76096">
    <property type="glycosylation" value="3 sites, 1 glycan"/>
</dbReference>
<dbReference type="GlyGen" id="O76096">
    <property type="glycosylation" value="5 sites, 1 N-linked glycan (1 site), 1 O-linked glycan (2 sites)"/>
</dbReference>
<dbReference type="iPTMnet" id="O76096"/>
<dbReference type="PhosphoSitePlus" id="O76096"/>
<dbReference type="BioMuta" id="CST7"/>
<dbReference type="jPOST" id="O76096"/>
<dbReference type="MassIVE" id="O76096"/>
<dbReference type="PaxDb" id="9606-ENSP00000420384"/>
<dbReference type="PeptideAtlas" id="O76096"/>
<dbReference type="ProteomicsDB" id="50415"/>
<dbReference type="Antibodypedia" id="24951">
    <property type="antibodies" value="174 antibodies from 33 providers"/>
</dbReference>
<dbReference type="DNASU" id="8530"/>
<dbReference type="Ensembl" id="ENST00000480798.2">
    <property type="protein sequence ID" value="ENSP00000420384.1"/>
    <property type="gene ID" value="ENSG00000077984.6"/>
</dbReference>
<dbReference type="GeneID" id="8530"/>
<dbReference type="KEGG" id="hsa:8530"/>
<dbReference type="MANE-Select" id="ENST00000480798.2">
    <property type="protein sequence ID" value="ENSP00000420384.1"/>
    <property type="RefSeq nucleotide sequence ID" value="NM_003650.4"/>
    <property type="RefSeq protein sequence ID" value="NP_003641.3"/>
</dbReference>
<dbReference type="UCSC" id="uc002wtx.2">
    <property type="organism name" value="human"/>
</dbReference>
<dbReference type="AGR" id="HGNC:2479"/>
<dbReference type="CTD" id="8530"/>
<dbReference type="DisGeNET" id="8530"/>
<dbReference type="GeneCards" id="CST7"/>
<dbReference type="HGNC" id="HGNC:2479">
    <property type="gene designation" value="CST7"/>
</dbReference>
<dbReference type="HPA" id="ENSG00000077984">
    <property type="expression patterns" value="Tissue enriched (bone)"/>
</dbReference>
<dbReference type="MIM" id="603253">
    <property type="type" value="gene"/>
</dbReference>
<dbReference type="neXtProt" id="NX_O76096"/>
<dbReference type="OpenTargets" id="ENSG00000077984"/>
<dbReference type="PharmGKB" id="PA26980"/>
<dbReference type="VEuPathDB" id="HostDB:ENSG00000077984"/>
<dbReference type="eggNOG" id="ENOG502S5CP">
    <property type="taxonomic scope" value="Eukaryota"/>
</dbReference>
<dbReference type="GeneTree" id="ENSGT00940000160277"/>
<dbReference type="HOGENOM" id="CLU_118168_1_0_1"/>
<dbReference type="InParanoid" id="O76096"/>
<dbReference type="OMA" id="WLQHFEV"/>
<dbReference type="OrthoDB" id="9929365at2759"/>
<dbReference type="PAN-GO" id="O76096">
    <property type="GO annotations" value="9 GO annotations based on evolutionary models"/>
</dbReference>
<dbReference type="PhylomeDB" id="O76096"/>
<dbReference type="PathwayCommons" id="O76096"/>
<dbReference type="SignaLink" id="O76096"/>
<dbReference type="BioGRID-ORCS" id="8530">
    <property type="hits" value="11 hits in 1142 CRISPR screens"/>
</dbReference>
<dbReference type="ChiTaRS" id="CST7">
    <property type="organism name" value="human"/>
</dbReference>
<dbReference type="EvolutionaryTrace" id="O76096"/>
<dbReference type="GeneWiki" id="CST7_(gene)"/>
<dbReference type="GenomeRNAi" id="8530"/>
<dbReference type="Pharos" id="O76096">
    <property type="development level" value="Tbio"/>
</dbReference>
<dbReference type="PRO" id="PR:O76096"/>
<dbReference type="Proteomes" id="UP000005640">
    <property type="component" value="Chromosome 20"/>
</dbReference>
<dbReference type="RNAct" id="O76096">
    <property type="molecule type" value="protein"/>
</dbReference>
<dbReference type="Bgee" id="ENSG00000077984">
    <property type="expression patterns" value="Expressed in granulocyte and 112 other cell types or tissues"/>
</dbReference>
<dbReference type="GO" id="GO:0031410">
    <property type="term" value="C:cytoplasmic vesicle"/>
    <property type="evidence" value="ECO:0000314"/>
    <property type="project" value="ARUK-UCL"/>
</dbReference>
<dbReference type="GO" id="GO:0005783">
    <property type="term" value="C:endoplasmic reticulum"/>
    <property type="evidence" value="ECO:0000314"/>
    <property type="project" value="ARUK-UCL"/>
</dbReference>
<dbReference type="GO" id="GO:0005768">
    <property type="term" value="C:endosome"/>
    <property type="evidence" value="ECO:0000314"/>
    <property type="project" value="ARUK-UCL"/>
</dbReference>
<dbReference type="GO" id="GO:0005615">
    <property type="term" value="C:extracellular space"/>
    <property type="evidence" value="ECO:0000314"/>
    <property type="project" value="ARUK-UCL"/>
</dbReference>
<dbReference type="GO" id="GO:0005794">
    <property type="term" value="C:Golgi apparatus"/>
    <property type="evidence" value="ECO:0000314"/>
    <property type="project" value="ARUK-UCL"/>
</dbReference>
<dbReference type="GO" id="GO:0005770">
    <property type="term" value="C:late endosome"/>
    <property type="evidence" value="ECO:0000318"/>
    <property type="project" value="GO_Central"/>
</dbReference>
<dbReference type="GO" id="GO:0005764">
    <property type="term" value="C:lysosome"/>
    <property type="evidence" value="ECO:0000314"/>
    <property type="project" value="ARUK-UCL"/>
</dbReference>
<dbReference type="GO" id="GO:0005771">
    <property type="term" value="C:multivesicular body"/>
    <property type="evidence" value="ECO:0000314"/>
    <property type="project" value="ARUK-UCL"/>
</dbReference>
<dbReference type="GO" id="GO:0004869">
    <property type="term" value="F:cysteine-type endopeptidase inhibitor activity"/>
    <property type="evidence" value="ECO:0000314"/>
    <property type="project" value="ARUK-UCL"/>
</dbReference>
<dbReference type="GO" id="GO:0004866">
    <property type="term" value="F:endopeptidase inhibitor activity"/>
    <property type="evidence" value="ECO:0000304"/>
    <property type="project" value="ProtInc"/>
</dbReference>
<dbReference type="GO" id="GO:0030414">
    <property type="term" value="F:peptidase inhibitor activity"/>
    <property type="evidence" value="ECO:0000314"/>
    <property type="project" value="ARUK-UCL"/>
</dbReference>
<dbReference type="GO" id="GO:0002020">
    <property type="term" value="F:protease binding"/>
    <property type="evidence" value="ECO:0000353"/>
    <property type="project" value="ARUK-UCL"/>
</dbReference>
<dbReference type="GO" id="GO:0042803">
    <property type="term" value="F:protein homodimerization activity"/>
    <property type="evidence" value="ECO:0000353"/>
    <property type="project" value="ARUK-UCL"/>
</dbReference>
<dbReference type="GO" id="GO:0006955">
    <property type="term" value="P:immune response"/>
    <property type="evidence" value="ECO:0000304"/>
    <property type="project" value="ARUK-UCL"/>
</dbReference>
<dbReference type="GO" id="GO:1905146">
    <property type="term" value="P:lysosomal protein catabolic process"/>
    <property type="evidence" value="ECO:0000314"/>
    <property type="project" value="ARUK-UCL"/>
</dbReference>
<dbReference type="GO" id="GO:1903979">
    <property type="term" value="P:negative regulation of microglial cell activation"/>
    <property type="evidence" value="ECO:0000318"/>
    <property type="project" value="GO_Central"/>
</dbReference>
<dbReference type="GO" id="GO:0031643">
    <property type="term" value="P:positive regulation of myelination"/>
    <property type="evidence" value="ECO:0000318"/>
    <property type="project" value="GO_Central"/>
</dbReference>
<dbReference type="GO" id="GO:0002577">
    <property type="term" value="P:regulation of antigen processing and presentation"/>
    <property type="evidence" value="ECO:0000314"/>
    <property type="project" value="ARUK-UCL"/>
</dbReference>
<dbReference type="CDD" id="cd00042">
    <property type="entry name" value="CY"/>
    <property type="match status" value="1"/>
</dbReference>
<dbReference type="FunFam" id="3.10.450.10:FF:000024">
    <property type="entry name" value="Cystatin F"/>
    <property type="match status" value="1"/>
</dbReference>
<dbReference type="Gene3D" id="3.10.450.10">
    <property type="match status" value="1"/>
</dbReference>
<dbReference type="InterPro" id="IPR042886">
    <property type="entry name" value="Cystatin-F"/>
</dbReference>
<dbReference type="InterPro" id="IPR000010">
    <property type="entry name" value="Cystatin_dom"/>
</dbReference>
<dbReference type="InterPro" id="IPR046350">
    <property type="entry name" value="Cystatin_sf"/>
</dbReference>
<dbReference type="PANTHER" id="PTHR47141">
    <property type="entry name" value="CYSTATIN-F"/>
    <property type="match status" value="1"/>
</dbReference>
<dbReference type="PANTHER" id="PTHR47141:SF1">
    <property type="entry name" value="CYSTATIN-F"/>
    <property type="match status" value="1"/>
</dbReference>
<dbReference type="Pfam" id="PF00031">
    <property type="entry name" value="Cystatin"/>
    <property type="match status" value="1"/>
</dbReference>
<dbReference type="SMART" id="SM00043">
    <property type="entry name" value="CY"/>
    <property type="match status" value="1"/>
</dbReference>
<dbReference type="SUPFAM" id="SSF54403">
    <property type="entry name" value="Cystatin/monellin"/>
    <property type="match status" value="1"/>
</dbReference>
<keyword id="KW-0002">3D-structure</keyword>
<keyword id="KW-0963">Cytoplasm</keyword>
<keyword id="KW-1015">Disulfide bond</keyword>
<keyword id="KW-0325">Glycoprotein</keyword>
<keyword id="KW-0646">Protease inhibitor</keyword>
<keyword id="KW-1267">Proteomics identification</keyword>
<keyword id="KW-1185">Reference proteome</keyword>
<keyword id="KW-0964">Secreted</keyword>
<keyword id="KW-0732">Signal</keyword>
<keyword id="KW-0789">Thiol protease inhibitor</keyword>
<organism>
    <name type="scientific">Homo sapiens</name>
    <name type="common">Human</name>
    <dbReference type="NCBI Taxonomy" id="9606"/>
    <lineage>
        <taxon>Eukaryota</taxon>
        <taxon>Metazoa</taxon>
        <taxon>Chordata</taxon>
        <taxon>Craniata</taxon>
        <taxon>Vertebrata</taxon>
        <taxon>Euteleostomi</taxon>
        <taxon>Mammalia</taxon>
        <taxon>Eutheria</taxon>
        <taxon>Euarchontoglires</taxon>
        <taxon>Primates</taxon>
        <taxon>Haplorrhini</taxon>
        <taxon>Catarrhini</taxon>
        <taxon>Hominidae</taxon>
        <taxon>Homo</taxon>
    </lineage>
</organism>
<proteinExistence type="evidence at protein level"/>
<reference key="1">
    <citation type="journal article" date="1998" name="J. Biol. Chem.">
        <title>Leukocystatin, a new class II cystatin expressed selectively by hematopoietic cells.</title>
        <authorList>
            <person name="Halfon S."/>
            <person name="Ford J."/>
            <person name="Foster J."/>
            <person name="Dowling L."/>
            <person name="Lucian L."/>
            <person name="Sterling M."/>
            <person name="Xu Y."/>
            <person name="Weiss M."/>
            <person name="Ikeda M."/>
            <person name="Liggett D."/>
            <person name="Helms A."/>
            <person name="Caux C."/>
            <person name="Lebecque S."/>
            <person name="Hannum C."/>
            <person name="Menon S."/>
            <person name="McClanahan T."/>
            <person name="Gorman D."/>
            <person name="Zurawski G."/>
        </authorList>
    </citation>
    <scope>NUCLEOTIDE SEQUENCE [MRNA]</scope>
</reference>
<reference key="2">
    <citation type="journal article" date="1998" name="J. Biol. Chem.">
        <title>Cystatin F is a glycosylated human low molecular weight cysteine proteinase inhibitor.</title>
        <authorList>
            <person name="Ni J."/>
            <person name="Fernandez M.A."/>
            <person name="Danielsson L."/>
            <person name="Chillakuru R.A."/>
            <person name="Zhang J."/>
            <person name="Grubb A."/>
            <person name="Su J."/>
            <person name="Gentz R."/>
            <person name="Abrahamson M."/>
        </authorList>
    </citation>
    <scope>NUCLEOTIDE SEQUENCE [MRNA]</scope>
</reference>
<reference key="3">
    <citation type="journal article" date="2000" name="Genomics">
        <title>Genomic construct and mapping of the gene for CMAP (leukocystatin/cystatin F, CST7) and identification of a proximal novel gene, BSCv (C20orf3).</title>
        <authorList>
            <person name="Morita M."/>
            <person name="Hara Y."/>
            <person name="Tamai Y."/>
            <person name="Arakawa H."/>
            <person name="Nishimura S."/>
        </authorList>
    </citation>
    <scope>NUCLEOTIDE SEQUENCE [GENOMIC DNA]</scope>
</reference>
<reference key="4">
    <citation type="journal article" date="2002" name="Eur. J. Biochem.">
        <title>Regulated expression and intracellular localization of cystatin F in human U937 cells.</title>
        <authorList>
            <person name="Nathanson C.M."/>
            <person name="Wasselius J."/>
            <person name="Wallin H."/>
            <person name="Abrahamson M."/>
        </authorList>
    </citation>
    <scope>NUCLEOTIDE SEQUENCE [GENOMIC DNA]</scope>
    <scope>SUBCELLULAR LOCATION</scope>
    <source>
        <tissue>Blood</tissue>
    </source>
</reference>
<reference key="5">
    <citation type="submission" date="1998-06" db="EMBL/GenBank/DDBJ databases">
        <title>Human homologue of murine CMAP.</title>
        <authorList>
            <person name="Morita M."/>
            <person name="Arakawa H."/>
            <person name="Yoshiuchi N."/>
        </authorList>
    </citation>
    <scope>NUCLEOTIDE SEQUENCE [MRNA]</scope>
</reference>
<reference key="6">
    <citation type="submission" date="2003-07" db="EMBL/GenBank/DDBJ databases">
        <title>Cloning of human full-length CDSs in BD Creator(TM) system donor vector.</title>
        <authorList>
            <person name="Kalnine N."/>
            <person name="Chen X."/>
            <person name="Rolfs A."/>
            <person name="Halleck A."/>
            <person name="Hines L."/>
            <person name="Eisenstein S."/>
            <person name="Koundinya M."/>
            <person name="Raphael J."/>
            <person name="Moreira D."/>
            <person name="Kelley T."/>
            <person name="LaBaer J."/>
            <person name="Lin Y."/>
            <person name="Phelan M."/>
            <person name="Farmer A."/>
        </authorList>
    </citation>
    <scope>NUCLEOTIDE SEQUENCE [LARGE SCALE MRNA]</scope>
</reference>
<reference key="7">
    <citation type="submission" date="2004-06" db="EMBL/GenBank/DDBJ databases">
        <title>Cloning of human full open reading frames in Gateway(TM) system entry vector (pDONR201).</title>
        <authorList>
            <person name="Ebert L."/>
            <person name="Schick M."/>
            <person name="Neubert P."/>
            <person name="Schatten R."/>
            <person name="Henze S."/>
            <person name="Korn B."/>
        </authorList>
    </citation>
    <scope>NUCLEOTIDE SEQUENCE [LARGE SCALE MRNA]</scope>
</reference>
<reference key="8">
    <citation type="journal article" date="2001" name="Nature">
        <title>The DNA sequence and comparative analysis of human chromosome 20.</title>
        <authorList>
            <person name="Deloukas P."/>
            <person name="Matthews L.H."/>
            <person name="Ashurst J.L."/>
            <person name="Burton J."/>
            <person name="Gilbert J.G.R."/>
            <person name="Jones M."/>
            <person name="Stavrides G."/>
            <person name="Almeida J.P."/>
            <person name="Babbage A.K."/>
            <person name="Bagguley C.L."/>
            <person name="Bailey J."/>
            <person name="Barlow K.F."/>
            <person name="Bates K.N."/>
            <person name="Beard L.M."/>
            <person name="Beare D.M."/>
            <person name="Beasley O.P."/>
            <person name="Bird C.P."/>
            <person name="Blakey S.E."/>
            <person name="Bridgeman A.M."/>
            <person name="Brown A.J."/>
            <person name="Buck D."/>
            <person name="Burrill W.D."/>
            <person name="Butler A.P."/>
            <person name="Carder C."/>
            <person name="Carter N.P."/>
            <person name="Chapman J.C."/>
            <person name="Clamp M."/>
            <person name="Clark G."/>
            <person name="Clark L.N."/>
            <person name="Clark S.Y."/>
            <person name="Clee C.M."/>
            <person name="Clegg S."/>
            <person name="Cobley V.E."/>
            <person name="Collier R.E."/>
            <person name="Connor R.E."/>
            <person name="Corby N.R."/>
            <person name="Coulson A."/>
            <person name="Coville G.J."/>
            <person name="Deadman R."/>
            <person name="Dhami P.D."/>
            <person name="Dunn M."/>
            <person name="Ellington A.G."/>
            <person name="Frankland J.A."/>
            <person name="Fraser A."/>
            <person name="French L."/>
            <person name="Garner P."/>
            <person name="Grafham D.V."/>
            <person name="Griffiths C."/>
            <person name="Griffiths M.N.D."/>
            <person name="Gwilliam R."/>
            <person name="Hall R.E."/>
            <person name="Hammond S."/>
            <person name="Harley J.L."/>
            <person name="Heath P.D."/>
            <person name="Ho S."/>
            <person name="Holden J.L."/>
            <person name="Howden P.J."/>
            <person name="Huckle E."/>
            <person name="Hunt A.R."/>
            <person name="Hunt S.E."/>
            <person name="Jekosch K."/>
            <person name="Johnson C.M."/>
            <person name="Johnson D."/>
            <person name="Kay M.P."/>
            <person name="Kimberley A.M."/>
            <person name="King A."/>
            <person name="Knights A."/>
            <person name="Laird G.K."/>
            <person name="Lawlor S."/>
            <person name="Lehvaeslaiho M.H."/>
            <person name="Leversha M.A."/>
            <person name="Lloyd C."/>
            <person name="Lloyd D.M."/>
            <person name="Lovell J.D."/>
            <person name="Marsh V.L."/>
            <person name="Martin S.L."/>
            <person name="McConnachie L.J."/>
            <person name="McLay K."/>
            <person name="McMurray A.A."/>
            <person name="Milne S.A."/>
            <person name="Mistry D."/>
            <person name="Moore M.J.F."/>
            <person name="Mullikin J.C."/>
            <person name="Nickerson T."/>
            <person name="Oliver K."/>
            <person name="Parker A."/>
            <person name="Patel R."/>
            <person name="Pearce T.A.V."/>
            <person name="Peck A.I."/>
            <person name="Phillimore B.J.C.T."/>
            <person name="Prathalingam S.R."/>
            <person name="Plumb R.W."/>
            <person name="Ramsay H."/>
            <person name="Rice C.M."/>
            <person name="Ross M.T."/>
            <person name="Scott C.E."/>
            <person name="Sehra H.K."/>
            <person name="Shownkeen R."/>
            <person name="Sims S."/>
            <person name="Skuce C.D."/>
            <person name="Smith M.L."/>
            <person name="Soderlund C."/>
            <person name="Steward C.A."/>
            <person name="Sulston J.E."/>
            <person name="Swann R.M."/>
            <person name="Sycamore N."/>
            <person name="Taylor R."/>
            <person name="Tee L."/>
            <person name="Thomas D.W."/>
            <person name="Thorpe A."/>
            <person name="Tracey A."/>
            <person name="Tromans A.C."/>
            <person name="Vaudin M."/>
            <person name="Wall M."/>
            <person name="Wallis J.M."/>
            <person name="Whitehead S.L."/>
            <person name="Whittaker P."/>
            <person name="Willey D.L."/>
            <person name="Williams L."/>
            <person name="Williams S.A."/>
            <person name="Wilming L."/>
            <person name="Wray P.W."/>
            <person name="Hubbard T."/>
            <person name="Durbin R.M."/>
            <person name="Bentley D.R."/>
            <person name="Beck S."/>
            <person name="Rogers J."/>
        </authorList>
    </citation>
    <scope>NUCLEOTIDE SEQUENCE [LARGE SCALE GENOMIC DNA]</scope>
</reference>
<reference key="9">
    <citation type="journal article" date="2004" name="Genome Res.">
        <title>The status, quality, and expansion of the NIH full-length cDNA project: the Mammalian Gene Collection (MGC).</title>
        <authorList>
            <consortium name="The MGC Project Team"/>
        </authorList>
    </citation>
    <scope>NUCLEOTIDE SEQUENCE [LARGE SCALE MRNA]</scope>
    <source>
        <tissue>Lung</tissue>
    </source>
</reference>
<reference key="10">
    <citation type="journal article" date="2015" name="Proteomics">
        <title>N-terminome analysis of the human mitochondrial proteome.</title>
        <authorList>
            <person name="Vaca Jacome A.S."/>
            <person name="Rabilloud T."/>
            <person name="Schaeffer-Reiss C."/>
            <person name="Rompais M."/>
            <person name="Ayoub D."/>
            <person name="Lane L."/>
            <person name="Bairoch A."/>
            <person name="Van Dorsselaer A."/>
            <person name="Carapito C."/>
        </authorList>
    </citation>
    <scope>CLEAVAGE OF SIGNAL PEPTIDE [LARGE SCALE ANALYSIS] AFTER GLY-19</scope>
    <scope>IDENTIFICATION BY MASS SPECTROMETRY [LARGE SCALE ANALYSIS]</scope>
</reference>
<reference key="11">
    <citation type="journal article" date="2006" name="J. Biol. Chem.">
        <title>Structural basis of reduction-dependent activation of human cystatin F.</title>
        <authorList>
            <person name="Schuettelkopf A.W."/>
            <person name="Hamilton G."/>
            <person name="Watts C."/>
            <person name="van Aalten D.M.F."/>
        </authorList>
    </citation>
    <scope>X-RAY CRYSTALLOGRAPHY (2.1 ANGSTROMS) OF 20-145</scope>
    <scope>SUBUNIT</scope>
    <scope>GLYCOSYLATION AT ASN-62 AND ASN-115</scope>
    <scope>DISULFIDE BONDS</scope>
</reference>
<feature type="signal peptide" evidence="1 5">
    <location>
        <begin position="1"/>
        <end position="19"/>
    </location>
</feature>
<feature type="chain" id="PRO_0000006646" description="Cystatin-F">
    <location>
        <begin position="20"/>
        <end position="145"/>
    </location>
</feature>
<feature type="short sequence motif" description="Secondary area of contact">
    <location>
        <begin position="81"/>
        <end position="85"/>
    </location>
</feature>
<feature type="site" description="Reactive site">
    <location>
        <position position="37"/>
    </location>
</feature>
<feature type="glycosylation site" description="N-linked (GlcNAc...) asparagine" evidence="3">
    <location>
        <position position="62"/>
    </location>
</feature>
<feature type="glycosylation site" description="N-linked (GlcNAc...) asparagine" evidence="3">
    <location>
        <position position="115"/>
    </location>
</feature>
<feature type="disulfide bond" description="Interchain (with C-63)" evidence="3">
    <location>
        <position position="26"/>
    </location>
</feature>
<feature type="disulfide bond" description="Interchain (with C-26)" evidence="3">
    <location>
        <position position="63"/>
    </location>
</feature>
<feature type="disulfide bond" evidence="3">
    <location>
        <begin position="99"/>
        <end position="110"/>
    </location>
</feature>
<feature type="disulfide bond" evidence="3">
    <location>
        <begin position="124"/>
        <end position="144"/>
    </location>
</feature>
<feature type="helix" evidence="6">
    <location>
        <begin position="47"/>
        <end position="63"/>
    </location>
</feature>
<feature type="strand" evidence="6">
    <location>
        <begin position="67"/>
        <end position="100"/>
    </location>
</feature>
<feature type="helix" evidence="6">
    <location>
        <begin position="107"/>
        <end position="109"/>
    </location>
</feature>
<feature type="turn" evidence="6">
    <location>
        <begin position="116"/>
        <end position="118"/>
    </location>
</feature>
<feature type="strand" evidence="6">
    <location>
        <begin position="121"/>
        <end position="131"/>
    </location>
</feature>
<feature type="helix" evidence="6">
    <location>
        <begin position="132"/>
        <end position="134"/>
    </location>
</feature>
<feature type="strand" evidence="6">
    <location>
        <begin position="136"/>
        <end position="145"/>
    </location>
</feature>
<sequence>MRAAGTLLAFCCLVLSTTGGPSPDTCSQDLNSRVKPGFPKTIKTNDPGVLQAARYSVEKFNNCTNDMFLFKESRITRALVQIVKGLKYMLEVEIGRTTCKKNQHLRLDDCDFQTNHTLKQTLSCYSEVWVVPWLQHFEVPVLRCH</sequence>
<gene>
    <name type="primary">CST7</name>
</gene>
<name>CYTF_HUMAN</name>
<evidence type="ECO:0000255" key="1"/>
<evidence type="ECO:0000269" key="2">
    <source>
    </source>
</evidence>
<evidence type="ECO:0000269" key="3">
    <source>
    </source>
</evidence>
<evidence type="ECO:0000305" key="4"/>
<evidence type="ECO:0007744" key="5">
    <source>
    </source>
</evidence>
<evidence type="ECO:0007829" key="6">
    <source>
        <dbReference type="PDB" id="2CH9"/>
    </source>
</evidence>
<accession>O76096</accession>
<accession>Q6FH95</accession>
<accession>Q7Z4J8</accession>
<accession>Q9UED4</accession>
<comment type="function">
    <text>Inhibits papain and cathepsin L but with affinities lower than other cystatins. May play a role in immune regulation through inhibition of a unique target in the hematopoietic system.</text>
</comment>
<comment type="subunit">
    <text evidence="3">Homodimer; disulfide-linked.</text>
</comment>
<comment type="interaction">
    <interactant intactId="EBI-2807448">
        <id>O76096</id>
    </interactant>
    <interactant intactId="EBI-1047323">
        <id>P53634</id>
        <label>CTSC</label>
    </interactant>
    <organismsDiffer>false</organismsDiffer>
    <experiments>2</experiments>
</comment>
<comment type="subcellular location">
    <subcellularLocation>
        <location evidence="2">Secreted</location>
    </subcellularLocation>
    <subcellularLocation>
        <location evidence="2">Cytoplasm</location>
    </subcellularLocation>
</comment>
<comment type="tissue specificity">
    <text>Primarily expressed in peripheral blood cells and spleen.</text>
</comment>
<comment type="similarity">
    <text evidence="4">Belongs to the cystatin family.</text>
</comment>
<comment type="sequence caution" evidence="4">
    <conflict type="erroneous initiation">
        <sequence resource="EMBL-CDS" id="AAH15507"/>
    </conflict>
    <text>Extended N-terminus.</text>
</comment>
<comment type="sequence caution" evidence="4">
    <conflict type="erroneous initiation">
        <sequence resource="EMBL-CDS" id="AAP88827"/>
    </conflict>
    <text>Extended N-terminus.</text>
</comment>
<comment type="sequence caution" evidence="4">
    <conflict type="erroneous initiation">
        <sequence resource="EMBL-CDS" id="BAA34941"/>
    </conflict>
    <text>Extended N-terminus.</text>
</comment>
<comment type="sequence caution" evidence="4">
    <conflict type="erroneous initiation">
        <sequence resource="EMBL-CDS" id="BAB11886"/>
    </conflict>
    <text>Extended N-terminus.</text>
</comment>